<sequence length="137" mass="15894">MKRLEKISSIVPILLRITLNLALIMVGFTLVAFLIREAFTIFNNIFFLDTDVSYYYMTQDILTFFLYFEFIALIVKYFESHFHFPLRYFIYIGITAIIRFIIVDHSSATSTLILSGAILLLVAALFLANTKMLKREG</sequence>
<dbReference type="EMBL" id="AE017262">
    <property type="protein sequence ID" value="AAT03633.1"/>
    <property type="molecule type" value="Genomic_DNA"/>
</dbReference>
<dbReference type="RefSeq" id="WP_003721401.1">
    <property type="nucleotide sequence ID" value="NC_002973.6"/>
</dbReference>
<dbReference type="SMR" id="Q721Y1"/>
<dbReference type="GeneID" id="61188719"/>
<dbReference type="KEGG" id="lmf:LMOf2365_0853"/>
<dbReference type="HOGENOM" id="CLU_127561_0_0_9"/>
<dbReference type="GO" id="GO:0005886">
    <property type="term" value="C:plasma membrane"/>
    <property type="evidence" value="ECO:0007669"/>
    <property type="project" value="UniProtKB-SubCell"/>
</dbReference>
<dbReference type="GO" id="GO:0016036">
    <property type="term" value="P:cellular response to phosphate starvation"/>
    <property type="evidence" value="ECO:0007669"/>
    <property type="project" value="InterPro"/>
</dbReference>
<dbReference type="HAMAP" id="MF_01048">
    <property type="entry name" value="PsiE"/>
    <property type="match status" value="1"/>
</dbReference>
<dbReference type="InterPro" id="IPR009315">
    <property type="entry name" value="P_starv_induced_PsiE"/>
</dbReference>
<dbReference type="InterPro" id="IPR020948">
    <property type="entry name" value="P_starv_induced_PsiE-like"/>
</dbReference>
<dbReference type="NCBIfam" id="NF002765">
    <property type="entry name" value="PRK02833.1-3"/>
    <property type="match status" value="1"/>
</dbReference>
<dbReference type="NCBIfam" id="NF002766">
    <property type="entry name" value="PRK02833.1-4"/>
    <property type="match status" value="1"/>
</dbReference>
<dbReference type="PANTHER" id="PTHR37819">
    <property type="entry name" value="PROTEIN PSIE"/>
    <property type="match status" value="1"/>
</dbReference>
<dbReference type="PANTHER" id="PTHR37819:SF1">
    <property type="entry name" value="PROTEIN PSIE"/>
    <property type="match status" value="1"/>
</dbReference>
<dbReference type="Pfam" id="PF06146">
    <property type="entry name" value="PsiE"/>
    <property type="match status" value="1"/>
</dbReference>
<dbReference type="PIRSF" id="PIRSF029598">
    <property type="entry name" value="PsiE"/>
    <property type="match status" value="1"/>
</dbReference>
<protein>
    <recommendedName>
        <fullName evidence="1">Protein PsiE homolog</fullName>
    </recommendedName>
</protein>
<evidence type="ECO:0000255" key="1">
    <source>
        <dbReference type="HAMAP-Rule" id="MF_01048"/>
    </source>
</evidence>
<name>PSIE_LISMF</name>
<reference key="1">
    <citation type="journal article" date="2004" name="Nucleic Acids Res.">
        <title>Whole genome comparisons of serotype 4b and 1/2a strains of the food-borne pathogen Listeria monocytogenes reveal new insights into the core genome components of this species.</title>
        <authorList>
            <person name="Nelson K.E."/>
            <person name="Fouts D.E."/>
            <person name="Mongodin E.F."/>
            <person name="Ravel J."/>
            <person name="DeBoy R.T."/>
            <person name="Kolonay J.F."/>
            <person name="Rasko D.A."/>
            <person name="Angiuoli S.V."/>
            <person name="Gill S.R."/>
            <person name="Paulsen I.T."/>
            <person name="Peterson J.D."/>
            <person name="White O."/>
            <person name="Nelson W.C."/>
            <person name="Nierman W.C."/>
            <person name="Beanan M.J."/>
            <person name="Brinkac L.M."/>
            <person name="Daugherty S.C."/>
            <person name="Dodson R.J."/>
            <person name="Durkin A.S."/>
            <person name="Madupu R."/>
            <person name="Haft D.H."/>
            <person name="Selengut J."/>
            <person name="Van Aken S.E."/>
            <person name="Khouri H.M."/>
            <person name="Fedorova N."/>
            <person name="Forberger H.A."/>
            <person name="Tran B."/>
            <person name="Kathariou S."/>
            <person name="Wonderling L.D."/>
            <person name="Uhlich G.A."/>
            <person name="Bayles D.O."/>
            <person name="Luchansky J.B."/>
            <person name="Fraser C.M."/>
        </authorList>
    </citation>
    <scope>NUCLEOTIDE SEQUENCE [LARGE SCALE GENOMIC DNA]</scope>
    <source>
        <strain>F2365</strain>
    </source>
</reference>
<accession>Q721Y1</accession>
<gene>
    <name evidence="1" type="primary">psiE</name>
    <name type="ordered locus">LMOf2365_0853</name>
</gene>
<comment type="subcellular location">
    <subcellularLocation>
        <location evidence="1">Cell membrane</location>
        <topology evidence="1">Multi-pass membrane protein</topology>
    </subcellularLocation>
</comment>
<comment type="similarity">
    <text evidence="1">Belongs to the PsiE family.</text>
</comment>
<organism>
    <name type="scientific">Listeria monocytogenes serotype 4b (strain F2365)</name>
    <dbReference type="NCBI Taxonomy" id="265669"/>
    <lineage>
        <taxon>Bacteria</taxon>
        <taxon>Bacillati</taxon>
        <taxon>Bacillota</taxon>
        <taxon>Bacilli</taxon>
        <taxon>Bacillales</taxon>
        <taxon>Listeriaceae</taxon>
        <taxon>Listeria</taxon>
    </lineage>
</organism>
<feature type="chain" id="PRO_0000160289" description="Protein PsiE homolog">
    <location>
        <begin position="1"/>
        <end position="137"/>
    </location>
</feature>
<feature type="transmembrane region" description="Helical" evidence="1">
    <location>
        <begin position="13"/>
        <end position="35"/>
    </location>
</feature>
<feature type="transmembrane region" description="Helical" evidence="1">
    <location>
        <begin position="55"/>
        <end position="77"/>
    </location>
</feature>
<feature type="transmembrane region" description="Helical" evidence="1">
    <location>
        <begin position="84"/>
        <end position="103"/>
    </location>
</feature>
<feature type="transmembrane region" description="Helical" evidence="1">
    <location>
        <begin position="107"/>
        <end position="129"/>
    </location>
</feature>
<proteinExistence type="inferred from homology"/>
<keyword id="KW-1003">Cell membrane</keyword>
<keyword id="KW-0472">Membrane</keyword>
<keyword id="KW-0812">Transmembrane</keyword>
<keyword id="KW-1133">Transmembrane helix</keyword>